<organism>
    <name type="scientific">Siganus canaliculatus</name>
    <name type="common">White-spotted spinefoot</name>
    <name type="synonym">Chaetodon canaliculatus</name>
    <dbReference type="NCBI Taxonomy" id="75042"/>
    <lineage>
        <taxon>Eukaryota</taxon>
        <taxon>Metazoa</taxon>
        <taxon>Chordata</taxon>
        <taxon>Craniata</taxon>
        <taxon>Vertebrata</taxon>
        <taxon>Euteleostomi</taxon>
        <taxon>Actinopterygii</taxon>
        <taxon>Neopterygii</taxon>
        <taxon>Teleostei</taxon>
        <taxon>Neoteleostei</taxon>
        <taxon>Acanthomorphata</taxon>
        <taxon>Eupercaria</taxon>
        <taxon>Siganidae</taxon>
        <taxon>Siganus</taxon>
    </lineage>
</organism>
<sequence length="445" mass="52005">MGGGGQLGESGENGCKSAAGVYTWEEVQHHSNRNDQWLVIDRKVYNVTQWAKRHPGGFRVLNHYAGEDATEAFTAFHPDIKFVQKYMKPLLVGELAATEPSQDQDKNAALIQDFHTLRQQAESEGLFQARPLFFLLHLGHILLLEALALLMVWHWGTGWLQTLLCAVMLATAQSQAGWLQHDFGHLSVFKKSRWNHLVHKFVIGHLKGASANWWNHRHFQHHAKPNIFKKDPDINMVDLFVLGETQPVEYGIKKIKNMPYNHQHKYFFLVAPPLLIPVFYNYNIMMTMITRRDYVDLSWAMTFYIRYMLCYVPVYGLFGSLALMMFARFLESHWFVWVTQMSHLPMDIDNDKRRDWLSMQLQATCNIEKSFFNDWFSGHLNFQIEHHLFPRMPRHNYHLVAPQVQTLCEKHGIPYEVKTLWKGMVDVVRALKKSGDLWLDAYLHK</sequence>
<proteinExistence type="evidence at protein level"/>
<reference key="1">
    <citation type="journal article" date="2010" name="Proc. Natl. Acad. Sci. U.S.A.">
        <title>Vertebrate fatty acyl desaturase with Delta4 activity.</title>
        <authorList>
            <person name="Li Y."/>
            <person name="Monroig O."/>
            <person name="Zhang L."/>
            <person name="Wang S."/>
            <person name="Zheng X."/>
            <person name="Dick J.R."/>
            <person name="You C."/>
            <person name="Tocher D.R."/>
        </authorList>
    </citation>
    <scope>NUCLEOTIDE SEQUENCE [MRNA]</scope>
    <scope>FUNCTION</scope>
    <scope>CATALYTIC ACTIVITY</scope>
    <scope>PATHWAY</scope>
</reference>
<accession>D8X2C5</accession>
<comment type="function">
    <text evidence="3">Fatty acid desaturase with bifunctional delta-4 and delta-5 activities. Component of a lipid metabolic pathway that catalyzes the biosynthesis of polyunsaturated fatty acids (PUFA) with preference toward n-3 substrates and Delta(4)function.</text>
</comment>
<comment type="catalytic activity">
    <reaction evidence="3">
        <text>(8Z,11Z,14Z,17Z)-eicosatetraenoyl-CoA + 2 Fe(II)-[cytochrome b5] + O2 + 2 H(+) = (5Z,8Z,11Z,14Z,17Z)-eicosapentaenoyl-CoA + 2 Fe(III)-[cytochrome b5] + 2 H2O</text>
        <dbReference type="Rhea" id="RHEA:46420"/>
        <dbReference type="Rhea" id="RHEA-COMP:10438"/>
        <dbReference type="Rhea" id="RHEA-COMP:10439"/>
        <dbReference type="ChEBI" id="CHEBI:15377"/>
        <dbReference type="ChEBI" id="CHEBI:15378"/>
        <dbReference type="ChEBI" id="CHEBI:15379"/>
        <dbReference type="ChEBI" id="CHEBI:29033"/>
        <dbReference type="ChEBI" id="CHEBI:29034"/>
        <dbReference type="ChEBI" id="CHEBI:73862"/>
        <dbReference type="ChEBI" id="CHEBI:74265"/>
        <dbReference type="EC" id="1.14.19.44"/>
    </reaction>
    <physiologicalReaction direction="left-to-right" evidence="3">
        <dbReference type="Rhea" id="RHEA:46421"/>
    </physiologicalReaction>
</comment>
<comment type="catalytic activity">
    <reaction evidence="3">
        <text>(7Z,10Z,13Z,16Z)-docosatetraenoyl-CoA + 2 Fe(II)-[cytochrome b5] + O2 + 2 H(+) = (4Z,7Z,10Z,13Z,16Z)-docosapentaenoyl-CoA + 2 Fe(III)-[cytochrome b5] + 2 H2O</text>
        <dbReference type="Rhea" id="RHEA:63648"/>
        <dbReference type="Rhea" id="RHEA-COMP:10438"/>
        <dbReference type="Rhea" id="RHEA-COMP:10439"/>
        <dbReference type="ChEBI" id="CHEBI:15377"/>
        <dbReference type="ChEBI" id="CHEBI:15378"/>
        <dbReference type="ChEBI" id="CHEBI:15379"/>
        <dbReference type="ChEBI" id="CHEBI:29033"/>
        <dbReference type="ChEBI" id="CHEBI:29034"/>
        <dbReference type="ChEBI" id="CHEBI:73856"/>
        <dbReference type="ChEBI" id="CHEBI:76368"/>
    </reaction>
    <physiologicalReaction direction="left-to-right" evidence="3">
        <dbReference type="Rhea" id="RHEA:63649"/>
    </physiologicalReaction>
</comment>
<comment type="catalytic activity">
    <reaction evidence="3">
        <text>(7Z,10Z,13Z,16Z,19Z)-docosapentaenoyl-CoA + 2 Fe(II)-[cytochrome b5] + O2 + 2 H(+) = (4Z,7Z,10Z,13Z,16Z,19Z)-docosahexaenoyl-CoA + 2 Fe(III)-[cytochrome b5] + 2 H2O</text>
        <dbReference type="Rhea" id="RHEA:63652"/>
        <dbReference type="Rhea" id="RHEA-COMP:10438"/>
        <dbReference type="Rhea" id="RHEA-COMP:10439"/>
        <dbReference type="ChEBI" id="CHEBI:15377"/>
        <dbReference type="ChEBI" id="CHEBI:15378"/>
        <dbReference type="ChEBI" id="CHEBI:15379"/>
        <dbReference type="ChEBI" id="CHEBI:29033"/>
        <dbReference type="ChEBI" id="CHEBI:29034"/>
        <dbReference type="ChEBI" id="CHEBI:73870"/>
        <dbReference type="ChEBI" id="CHEBI:74298"/>
    </reaction>
    <physiologicalReaction direction="left-to-right" evidence="3">
        <dbReference type="Rhea" id="RHEA:63653"/>
    </physiologicalReaction>
</comment>
<comment type="pathway">
    <text evidence="6">Lipid metabolism; polyunsaturated fatty acid biosynthesis.</text>
</comment>
<comment type="subcellular location">
    <subcellularLocation>
        <location evidence="1">Membrane</location>
        <topology evidence="1">Multi-pass membrane protein</topology>
    </subcellularLocation>
</comment>
<comment type="domain">
    <text evidence="3">The protein sequence includes a number of characteristic features of microsomal fatty acid desaturases including three histidine boxes and an N-terminal cytochrome b5 domain containing the heme-binding motif.</text>
</comment>
<comment type="similarity">
    <text evidence="5">Belongs to the fatty acid desaturase type 1 family.</text>
</comment>
<name>FAD2_SIGCA</name>
<keyword id="KW-0275">Fatty acid biosynthesis</keyword>
<keyword id="KW-0276">Fatty acid metabolism</keyword>
<keyword id="KW-0444">Lipid biosynthesis</keyword>
<keyword id="KW-0443">Lipid metabolism</keyword>
<keyword id="KW-0472">Membrane</keyword>
<keyword id="KW-0560">Oxidoreductase</keyword>
<keyword id="KW-0812">Transmembrane</keyword>
<keyword id="KW-1133">Transmembrane helix</keyword>
<gene>
    <name evidence="4" type="primary">fad2</name>
</gene>
<dbReference type="EC" id="1.14.19.44" evidence="3"/>
<dbReference type="EMBL" id="GU594278">
    <property type="protein sequence ID" value="ADJ29913.1"/>
    <property type="molecule type" value="mRNA"/>
</dbReference>
<dbReference type="SMR" id="D8X2C5"/>
<dbReference type="SwissLipids" id="SLP:000000442"/>
<dbReference type="UniPathway" id="UPA00658"/>
<dbReference type="GO" id="GO:0016020">
    <property type="term" value="C:membrane"/>
    <property type="evidence" value="ECO:0007669"/>
    <property type="project" value="UniProtKB-SubCell"/>
</dbReference>
<dbReference type="GO" id="GO:0062076">
    <property type="term" value="F:acyl-CoA (8-3)-desaturase activity"/>
    <property type="evidence" value="ECO:0007669"/>
    <property type="project" value="UniProtKB-EC"/>
</dbReference>
<dbReference type="GO" id="GO:0006636">
    <property type="term" value="P:unsaturated fatty acid biosynthetic process"/>
    <property type="evidence" value="ECO:0007669"/>
    <property type="project" value="UniProtKB-UniPathway"/>
</dbReference>
<dbReference type="CDD" id="cd03506">
    <property type="entry name" value="Delta6-FADS-like"/>
    <property type="match status" value="1"/>
</dbReference>
<dbReference type="FunFam" id="3.10.120.10:FF:000010">
    <property type="entry name" value="Delta-6 fatty acyl desaturase"/>
    <property type="match status" value="1"/>
</dbReference>
<dbReference type="Gene3D" id="3.10.120.10">
    <property type="entry name" value="Cytochrome b5-like heme/steroid binding domain"/>
    <property type="match status" value="1"/>
</dbReference>
<dbReference type="InterPro" id="IPR001199">
    <property type="entry name" value="Cyt_B5-like_heme/steroid-bd"/>
</dbReference>
<dbReference type="InterPro" id="IPR036400">
    <property type="entry name" value="Cyt_B5-like_heme/steroid_sf"/>
</dbReference>
<dbReference type="InterPro" id="IPR005804">
    <property type="entry name" value="FA_desaturase_dom"/>
</dbReference>
<dbReference type="InterPro" id="IPR012171">
    <property type="entry name" value="Fatty_acid_desaturase"/>
</dbReference>
<dbReference type="PANTHER" id="PTHR19353:SF12">
    <property type="entry name" value="ACYL-COA 6-DESATURASE"/>
    <property type="match status" value="1"/>
</dbReference>
<dbReference type="PANTHER" id="PTHR19353">
    <property type="entry name" value="FATTY ACID DESATURASE 2"/>
    <property type="match status" value="1"/>
</dbReference>
<dbReference type="Pfam" id="PF00173">
    <property type="entry name" value="Cyt-b5"/>
    <property type="match status" value="1"/>
</dbReference>
<dbReference type="Pfam" id="PF00487">
    <property type="entry name" value="FA_desaturase"/>
    <property type="match status" value="1"/>
</dbReference>
<dbReference type="PIRSF" id="PIRSF015921">
    <property type="entry name" value="FA_sphinglp_des"/>
    <property type="match status" value="1"/>
</dbReference>
<dbReference type="PRINTS" id="PR00363">
    <property type="entry name" value="CYTOCHROMEB5"/>
</dbReference>
<dbReference type="SMART" id="SM01117">
    <property type="entry name" value="Cyt-b5"/>
    <property type="match status" value="1"/>
</dbReference>
<dbReference type="SUPFAM" id="SSF55856">
    <property type="entry name" value="Cytochrome b5-like heme/steroid binding domain"/>
    <property type="match status" value="1"/>
</dbReference>
<dbReference type="PROSITE" id="PS50255">
    <property type="entry name" value="CYTOCHROME_B5_2"/>
    <property type="match status" value="1"/>
</dbReference>
<evidence type="ECO:0000255" key="1"/>
<evidence type="ECO:0000255" key="2">
    <source>
        <dbReference type="PROSITE-ProRule" id="PRU00279"/>
    </source>
</evidence>
<evidence type="ECO:0000269" key="3">
    <source>
    </source>
</evidence>
<evidence type="ECO:0000303" key="4">
    <source>
    </source>
</evidence>
<evidence type="ECO:0000305" key="5"/>
<evidence type="ECO:0000305" key="6">
    <source>
    </source>
</evidence>
<feature type="chain" id="PRO_0000451727" description="Acyl-CoA Delta-4 desaturase">
    <location>
        <begin position="1"/>
        <end position="445"/>
    </location>
</feature>
<feature type="transmembrane region" description="Helical" evidence="1">
    <location>
        <begin position="132"/>
        <end position="152"/>
    </location>
</feature>
<feature type="transmembrane region" description="Helical" evidence="1">
    <location>
        <begin position="153"/>
        <end position="173"/>
    </location>
</feature>
<feature type="transmembrane region" description="Helical" evidence="1">
    <location>
        <begin position="266"/>
        <end position="286"/>
    </location>
</feature>
<feature type="transmembrane region" description="Helical" evidence="1">
    <location>
        <begin position="307"/>
        <end position="327"/>
    </location>
</feature>
<feature type="domain" description="Cytochrome b5 heme-binding" evidence="2">
    <location>
        <begin position="19"/>
        <end position="96"/>
    </location>
</feature>
<protein>
    <recommendedName>
        <fullName evidence="6">Acyl-CoA Delta-4 desaturase</fullName>
        <ecNumber evidence="3">1.14.19.44</ecNumber>
    </recommendedName>
    <alternativeName>
        <fullName evidence="6">Delta(4)/Delta(5) fatty acid desaturase</fullName>
        <shortName evidence="6">D4D/D5D fatty acid desaturase</shortName>
        <shortName evidence="6">Delta-4/Delta-5 fatty acid desaturase</shortName>
    </alternativeName>
    <alternativeName>
        <fullName evidence="4">FAD2</fullName>
        <shortName>Delta-4 desaturase</shortName>
    </alternativeName>
</protein>